<keyword id="KW-0963">Cytoplasm</keyword>
<keyword id="KW-0479">Metal-binding</keyword>
<keyword id="KW-0862">Zinc</keyword>
<gene>
    <name type="ordered locus">Sez_1360</name>
</gene>
<feature type="chain" id="PRO_1000133232" description="Protein SprT-like">
    <location>
        <begin position="1"/>
        <end position="145"/>
    </location>
</feature>
<feature type="domain" description="SprT-like" evidence="1">
    <location>
        <begin position="5"/>
        <end position="140"/>
    </location>
</feature>
<feature type="active site" evidence="1">
    <location>
        <position position="65"/>
    </location>
</feature>
<feature type="binding site" evidence="1">
    <location>
        <position position="64"/>
    </location>
    <ligand>
        <name>Zn(2+)</name>
        <dbReference type="ChEBI" id="CHEBI:29105"/>
    </ligand>
</feature>
<feature type="binding site" evidence="1">
    <location>
        <position position="68"/>
    </location>
    <ligand>
        <name>Zn(2+)</name>
        <dbReference type="ChEBI" id="CHEBI:29105"/>
    </ligand>
</feature>
<proteinExistence type="inferred from homology"/>
<reference key="1">
    <citation type="journal article" date="2008" name="PLoS ONE">
        <title>Genome sequence of a lancefield group C Streptococcus zooepidemicus strain causing epidemic nephritis: new information about an old disease.</title>
        <authorList>
            <person name="Beres S.B."/>
            <person name="Sesso R."/>
            <person name="Pinto S.W.L."/>
            <person name="Hoe N.P."/>
            <person name="Porcella S.F."/>
            <person name="Deleo F.R."/>
            <person name="Musser J.M."/>
        </authorList>
    </citation>
    <scope>NUCLEOTIDE SEQUENCE [LARGE SCALE GENOMIC DNA]</scope>
    <source>
        <strain>MGCS10565</strain>
    </source>
</reference>
<organism>
    <name type="scientific">Streptococcus equi subsp. zooepidemicus (strain MGCS10565)</name>
    <dbReference type="NCBI Taxonomy" id="552526"/>
    <lineage>
        <taxon>Bacteria</taxon>
        <taxon>Bacillati</taxon>
        <taxon>Bacillota</taxon>
        <taxon>Bacilli</taxon>
        <taxon>Lactobacillales</taxon>
        <taxon>Streptococcaceae</taxon>
        <taxon>Streptococcus</taxon>
    </lineage>
</organism>
<sequence>MTLTDYVREVSLADFGKPFKHQASWNRRLRTTGGRFFPKDGHLDFNPKILEEHGETVFRQIVRHELCHYHLYFEGLGFRHKDQAFKELLDQVDGLRYAPRLQSHQANYLYICQHCGQAYDRKRPINLAVFACGRCHGRLIEKNQS</sequence>
<accession>B4U3X9</accession>
<comment type="cofactor">
    <cofactor evidence="1">
        <name>Zn(2+)</name>
        <dbReference type="ChEBI" id="CHEBI:29105"/>
    </cofactor>
    <text evidence="1">Binds 1 zinc ion.</text>
</comment>
<comment type="subcellular location">
    <subcellularLocation>
        <location evidence="1">Cytoplasm</location>
    </subcellularLocation>
</comment>
<comment type="similarity">
    <text evidence="1">Belongs to the SprT family.</text>
</comment>
<name>SPRTL_STREM</name>
<evidence type="ECO:0000255" key="1">
    <source>
        <dbReference type="HAMAP-Rule" id="MF_00745"/>
    </source>
</evidence>
<protein>
    <recommendedName>
        <fullName evidence="1">Protein SprT-like</fullName>
    </recommendedName>
</protein>
<dbReference type="EMBL" id="CP001129">
    <property type="protein sequence ID" value="ACG62696.1"/>
    <property type="molecule type" value="Genomic_DNA"/>
</dbReference>
<dbReference type="RefSeq" id="WP_012515959.1">
    <property type="nucleotide sequence ID" value="NC_011134.1"/>
</dbReference>
<dbReference type="KEGG" id="sez:Sez_1360"/>
<dbReference type="HOGENOM" id="CLU_123820_0_0_9"/>
<dbReference type="Proteomes" id="UP000001873">
    <property type="component" value="Chromosome"/>
</dbReference>
<dbReference type="GO" id="GO:0005737">
    <property type="term" value="C:cytoplasm"/>
    <property type="evidence" value="ECO:0007669"/>
    <property type="project" value="UniProtKB-SubCell"/>
</dbReference>
<dbReference type="GO" id="GO:0008270">
    <property type="term" value="F:zinc ion binding"/>
    <property type="evidence" value="ECO:0007669"/>
    <property type="project" value="UniProtKB-UniRule"/>
</dbReference>
<dbReference type="GO" id="GO:0006950">
    <property type="term" value="P:response to stress"/>
    <property type="evidence" value="ECO:0007669"/>
    <property type="project" value="UniProtKB-ARBA"/>
</dbReference>
<dbReference type="HAMAP" id="MF_00745">
    <property type="entry name" value="SprT_like"/>
    <property type="match status" value="1"/>
</dbReference>
<dbReference type="InterPro" id="IPR006640">
    <property type="entry name" value="SprT-like_domain"/>
</dbReference>
<dbReference type="InterPro" id="IPR023524">
    <property type="entry name" value="Uncharacterised_SprT-like"/>
</dbReference>
<dbReference type="NCBIfam" id="NF003339">
    <property type="entry name" value="PRK04351.1"/>
    <property type="match status" value="1"/>
</dbReference>
<dbReference type="Pfam" id="PF10263">
    <property type="entry name" value="SprT-like"/>
    <property type="match status" value="1"/>
</dbReference>
<dbReference type="SMART" id="SM00731">
    <property type="entry name" value="SprT"/>
    <property type="match status" value="1"/>
</dbReference>